<dbReference type="EC" id="2.8.4.4" evidence="1"/>
<dbReference type="EMBL" id="CP000930">
    <property type="protein sequence ID" value="ABZ84919.1"/>
    <property type="molecule type" value="Genomic_DNA"/>
</dbReference>
<dbReference type="RefSeq" id="WP_012283416.1">
    <property type="nucleotide sequence ID" value="NC_010337.2"/>
</dbReference>
<dbReference type="SMR" id="B0TIH8"/>
<dbReference type="STRING" id="498761.HM1_2369"/>
<dbReference type="KEGG" id="hmo:HM1_2369"/>
<dbReference type="eggNOG" id="COG0621">
    <property type="taxonomic scope" value="Bacteria"/>
</dbReference>
<dbReference type="HOGENOM" id="CLU_018697_0_1_9"/>
<dbReference type="OrthoDB" id="9805215at2"/>
<dbReference type="Proteomes" id="UP000008550">
    <property type="component" value="Chromosome"/>
</dbReference>
<dbReference type="GO" id="GO:0005829">
    <property type="term" value="C:cytosol"/>
    <property type="evidence" value="ECO:0007669"/>
    <property type="project" value="TreeGrafter"/>
</dbReference>
<dbReference type="GO" id="GO:0051539">
    <property type="term" value="F:4 iron, 4 sulfur cluster binding"/>
    <property type="evidence" value="ECO:0007669"/>
    <property type="project" value="UniProtKB-UniRule"/>
</dbReference>
<dbReference type="GO" id="GO:0035599">
    <property type="term" value="F:aspartic acid methylthiotransferase activity"/>
    <property type="evidence" value="ECO:0007669"/>
    <property type="project" value="TreeGrafter"/>
</dbReference>
<dbReference type="GO" id="GO:0046872">
    <property type="term" value="F:metal ion binding"/>
    <property type="evidence" value="ECO:0007669"/>
    <property type="project" value="UniProtKB-KW"/>
</dbReference>
<dbReference type="GO" id="GO:0103039">
    <property type="term" value="F:protein methylthiotransferase activity"/>
    <property type="evidence" value="ECO:0007669"/>
    <property type="project" value="UniProtKB-EC"/>
</dbReference>
<dbReference type="GO" id="GO:0006400">
    <property type="term" value="P:tRNA modification"/>
    <property type="evidence" value="ECO:0007669"/>
    <property type="project" value="InterPro"/>
</dbReference>
<dbReference type="CDD" id="cd01335">
    <property type="entry name" value="Radical_SAM"/>
    <property type="match status" value="1"/>
</dbReference>
<dbReference type="FunFam" id="3.80.30.20:FF:000001">
    <property type="entry name" value="tRNA-2-methylthio-N(6)-dimethylallyladenosine synthase 2"/>
    <property type="match status" value="1"/>
</dbReference>
<dbReference type="Gene3D" id="3.40.50.12160">
    <property type="entry name" value="Methylthiotransferase, N-terminal domain"/>
    <property type="match status" value="1"/>
</dbReference>
<dbReference type="Gene3D" id="2.40.50.140">
    <property type="entry name" value="Nucleic acid-binding proteins"/>
    <property type="match status" value="1"/>
</dbReference>
<dbReference type="Gene3D" id="3.80.30.20">
    <property type="entry name" value="tm_1862 like domain"/>
    <property type="match status" value="1"/>
</dbReference>
<dbReference type="HAMAP" id="MF_01865">
    <property type="entry name" value="MTTase_RimO"/>
    <property type="match status" value="1"/>
</dbReference>
<dbReference type="InterPro" id="IPR006638">
    <property type="entry name" value="Elp3/MiaA/NifB-like_rSAM"/>
</dbReference>
<dbReference type="InterPro" id="IPR005839">
    <property type="entry name" value="Methylthiotransferase"/>
</dbReference>
<dbReference type="InterPro" id="IPR013848">
    <property type="entry name" value="Methylthiotransferase_N"/>
</dbReference>
<dbReference type="InterPro" id="IPR038135">
    <property type="entry name" value="Methylthiotransferase_N_sf"/>
</dbReference>
<dbReference type="InterPro" id="IPR012340">
    <property type="entry name" value="NA-bd_OB-fold"/>
</dbReference>
<dbReference type="InterPro" id="IPR005840">
    <property type="entry name" value="Ribosomal_uS12_MeSTrfase_RimO"/>
</dbReference>
<dbReference type="InterPro" id="IPR007197">
    <property type="entry name" value="rSAM"/>
</dbReference>
<dbReference type="InterPro" id="IPR023404">
    <property type="entry name" value="rSAM_horseshoe"/>
</dbReference>
<dbReference type="InterPro" id="IPR002792">
    <property type="entry name" value="TRAM_dom"/>
</dbReference>
<dbReference type="NCBIfam" id="TIGR01125">
    <property type="entry name" value="30S ribosomal protein S12 methylthiotransferase RimO"/>
    <property type="match status" value="1"/>
</dbReference>
<dbReference type="NCBIfam" id="TIGR00089">
    <property type="entry name" value="MiaB/RimO family radical SAM methylthiotransferase"/>
    <property type="match status" value="1"/>
</dbReference>
<dbReference type="PANTHER" id="PTHR43837">
    <property type="entry name" value="RIBOSOMAL PROTEIN S12 METHYLTHIOTRANSFERASE RIMO"/>
    <property type="match status" value="1"/>
</dbReference>
<dbReference type="PANTHER" id="PTHR43837:SF1">
    <property type="entry name" value="RIBOSOMAL PROTEIN US12 METHYLTHIOTRANSFERASE RIMO"/>
    <property type="match status" value="1"/>
</dbReference>
<dbReference type="Pfam" id="PF04055">
    <property type="entry name" value="Radical_SAM"/>
    <property type="match status" value="1"/>
</dbReference>
<dbReference type="Pfam" id="PF18693">
    <property type="entry name" value="TRAM_2"/>
    <property type="match status" value="1"/>
</dbReference>
<dbReference type="Pfam" id="PF00919">
    <property type="entry name" value="UPF0004"/>
    <property type="match status" value="1"/>
</dbReference>
<dbReference type="SFLD" id="SFLDG01082">
    <property type="entry name" value="B12-binding_domain_containing"/>
    <property type="match status" value="1"/>
</dbReference>
<dbReference type="SFLD" id="SFLDS00029">
    <property type="entry name" value="Radical_SAM"/>
    <property type="match status" value="1"/>
</dbReference>
<dbReference type="SFLD" id="SFLDF00274">
    <property type="entry name" value="ribosomal_protein_S12_methylth"/>
    <property type="match status" value="1"/>
</dbReference>
<dbReference type="SMART" id="SM00729">
    <property type="entry name" value="Elp3"/>
    <property type="match status" value="1"/>
</dbReference>
<dbReference type="SUPFAM" id="SSF102114">
    <property type="entry name" value="Radical SAM enzymes"/>
    <property type="match status" value="1"/>
</dbReference>
<dbReference type="PROSITE" id="PS51449">
    <property type="entry name" value="MTTASE_N"/>
    <property type="match status" value="1"/>
</dbReference>
<dbReference type="PROSITE" id="PS51918">
    <property type="entry name" value="RADICAL_SAM"/>
    <property type="match status" value="1"/>
</dbReference>
<dbReference type="PROSITE" id="PS50926">
    <property type="entry name" value="TRAM"/>
    <property type="match status" value="1"/>
</dbReference>
<accession>B0TIH8</accession>
<name>RIMO_HELMI</name>
<sequence>MDGALFLLRGRTEAILTMKIHITSLGCAKNRVDTEVMMGLLREAGYELTQREEDAHVLLVNTCGFILPAKEESIQTILELARYKETGRCRALLVAGCLPQGYAGELAAELPEVDAFFGPGDVPRVTSIVAEVLRGKRSLEVGKPDFLYDHTMPRVLSTPFHYAYVKIADGCDNRCGYCAIPNLRGRFRSRSEESIVEETRSLVDRGIQEALLIAQDTTCYGVDRYGEFRLAQLIGKLASIDGLRWIRLMYCYPSHFTPELIEAMAAEPKVCRYVDLPLQHADDELLRSMNRHAGVDEIRRLIRTLRERLPGLAIRTSFIVGLPGETEEKFQRLLDFLAEMRFDRVGIFTYSREENTPAGKLADQVPEEVKEERYHRAMVLQQEISLSIQQEWIGKTLEVLVEEEVAPGLYRGRSEREAPEVDGHIEFKGRHRMIGEWANVRITAASHYDLMGEAIDEPGE</sequence>
<reference key="1">
    <citation type="journal article" date="2008" name="J. Bacteriol.">
        <title>The genome of Heliobacterium modesticaldum, a phototrophic representative of the Firmicutes containing the simplest photosynthetic apparatus.</title>
        <authorList>
            <person name="Sattley W.M."/>
            <person name="Madigan M.T."/>
            <person name="Swingley W.D."/>
            <person name="Cheung P.C."/>
            <person name="Clocksin K.M."/>
            <person name="Conrad A.L."/>
            <person name="Dejesa L.C."/>
            <person name="Honchak B.M."/>
            <person name="Jung D.O."/>
            <person name="Karbach L.E."/>
            <person name="Kurdoglu A."/>
            <person name="Lahiri S."/>
            <person name="Mastrian S.D."/>
            <person name="Page L.E."/>
            <person name="Taylor H.L."/>
            <person name="Wang Z.T."/>
            <person name="Raymond J."/>
            <person name="Chen M."/>
            <person name="Blankenship R.E."/>
            <person name="Touchman J.W."/>
        </authorList>
    </citation>
    <scope>NUCLEOTIDE SEQUENCE [LARGE SCALE GENOMIC DNA]</scope>
    <source>
        <strain>ATCC 51547 / Ice1</strain>
    </source>
</reference>
<keyword id="KW-0004">4Fe-4S</keyword>
<keyword id="KW-0963">Cytoplasm</keyword>
<keyword id="KW-0408">Iron</keyword>
<keyword id="KW-0411">Iron-sulfur</keyword>
<keyword id="KW-0479">Metal-binding</keyword>
<keyword id="KW-1185">Reference proteome</keyword>
<keyword id="KW-0949">S-adenosyl-L-methionine</keyword>
<keyword id="KW-0808">Transferase</keyword>
<evidence type="ECO:0000255" key="1">
    <source>
        <dbReference type="HAMAP-Rule" id="MF_01865"/>
    </source>
</evidence>
<evidence type="ECO:0000255" key="2">
    <source>
        <dbReference type="PROSITE-ProRule" id="PRU01266"/>
    </source>
</evidence>
<feature type="chain" id="PRO_0000374862" description="Ribosomal protein uS12 methylthiotransferase RimO">
    <location>
        <begin position="1"/>
        <end position="460"/>
    </location>
</feature>
<feature type="domain" description="MTTase N-terminal" evidence="1">
    <location>
        <begin position="18"/>
        <end position="134"/>
    </location>
</feature>
<feature type="domain" description="Radical SAM core" evidence="2">
    <location>
        <begin position="157"/>
        <end position="387"/>
    </location>
</feature>
<feature type="domain" description="TRAM" evidence="1">
    <location>
        <begin position="390"/>
        <end position="456"/>
    </location>
</feature>
<feature type="binding site" evidence="1">
    <location>
        <position position="27"/>
    </location>
    <ligand>
        <name>[4Fe-4S] cluster</name>
        <dbReference type="ChEBI" id="CHEBI:49883"/>
        <label>1</label>
    </ligand>
</feature>
<feature type="binding site" evidence="1">
    <location>
        <position position="63"/>
    </location>
    <ligand>
        <name>[4Fe-4S] cluster</name>
        <dbReference type="ChEBI" id="CHEBI:49883"/>
        <label>1</label>
    </ligand>
</feature>
<feature type="binding site" evidence="1">
    <location>
        <position position="97"/>
    </location>
    <ligand>
        <name>[4Fe-4S] cluster</name>
        <dbReference type="ChEBI" id="CHEBI:49883"/>
        <label>1</label>
    </ligand>
</feature>
<feature type="binding site" evidence="1">
    <location>
        <position position="171"/>
    </location>
    <ligand>
        <name>[4Fe-4S] cluster</name>
        <dbReference type="ChEBI" id="CHEBI:49883"/>
        <label>2</label>
        <note>4Fe-4S-S-AdoMet</note>
    </ligand>
</feature>
<feature type="binding site" evidence="1">
    <location>
        <position position="175"/>
    </location>
    <ligand>
        <name>[4Fe-4S] cluster</name>
        <dbReference type="ChEBI" id="CHEBI:49883"/>
        <label>2</label>
        <note>4Fe-4S-S-AdoMet</note>
    </ligand>
</feature>
<feature type="binding site" evidence="1">
    <location>
        <position position="178"/>
    </location>
    <ligand>
        <name>[4Fe-4S] cluster</name>
        <dbReference type="ChEBI" id="CHEBI:49883"/>
        <label>2</label>
        <note>4Fe-4S-S-AdoMet</note>
    </ligand>
</feature>
<comment type="function">
    <text evidence="1">Catalyzes the methylthiolation of an aspartic acid residue of ribosomal protein uS12.</text>
</comment>
<comment type="catalytic activity">
    <reaction evidence="1">
        <text>L-aspartate(89)-[ribosomal protein uS12]-hydrogen + (sulfur carrier)-SH + AH2 + 2 S-adenosyl-L-methionine = 3-methylsulfanyl-L-aspartate(89)-[ribosomal protein uS12]-hydrogen + (sulfur carrier)-H + 5'-deoxyadenosine + L-methionine + A + S-adenosyl-L-homocysteine + 2 H(+)</text>
        <dbReference type="Rhea" id="RHEA:37087"/>
        <dbReference type="Rhea" id="RHEA-COMP:10460"/>
        <dbReference type="Rhea" id="RHEA-COMP:10461"/>
        <dbReference type="Rhea" id="RHEA-COMP:14737"/>
        <dbReference type="Rhea" id="RHEA-COMP:14739"/>
        <dbReference type="ChEBI" id="CHEBI:13193"/>
        <dbReference type="ChEBI" id="CHEBI:15378"/>
        <dbReference type="ChEBI" id="CHEBI:17319"/>
        <dbReference type="ChEBI" id="CHEBI:17499"/>
        <dbReference type="ChEBI" id="CHEBI:29917"/>
        <dbReference type="ChEBI" id="CHEBI:29961"/>
        <dbReference type="ChEBI" id="CHEBI:57844"/>
        <dbReference type="ChEBI" id="CHEBI:57856"/>
        <dbReference type="ChEBI" id="CHEBI:59789"/>
        <dbReference type="ChEBI" id="CHEBI:64428"/>
        <dbReference type="ChEBI" id="CHEBI:73599"/>
        <dbReference type="EC" id="2.8.4.4"/>
    </reaction>
</comment>
<comment type="cofactor">
    <cofactor evidence="1">
        <name>[4Fe-4S] cluster</name>
        <dbReference type="ChEBI" id="CHEBI:49883"/>
    </cofactor>
    <text evidence="1">Binds 2 [4Fe-4S] clusters. One cluster is coordinated with 3 cysteines and an exchangeable S-adenosyl-L-methionine.</text>
</comment>
<comment type="subcellular location">
    <subcellularLocation>
        <location evidence="1">Cytoplasm</location>
    </subcellularLocation>
</comment>
<comment type="similarity">
    <text evidence="1">Belongs to the methylthiotransferase family. RimO subfamily.</text>
</comment>
<organism>
    <name type="scientific">Heliobacterium modesticaldum (strain ATCC 51547 / Ice1)</name>
    <dbReference type="NCBI Taxonomy" id="498761"/>
    <lineage>
        <taxon>Bacteria</taxon>
        <taxon>Bacillati</taxon>
        <taxon>Bacillota</taxon>
        <taxon>Clostridia</taxon>
        <taxon>Eubacteriales</taxon>
        <taxon>Heliobacteriaceae</taxon>
        <taxon>Heliomicrobium</taxon>
    </lineage>
</organism>
<protein>
    <recommendedName>
        <fullName evidence="1">Ribosomal protein uS12 methylthiotransferase RimO</fullName>
        <shortName evidence="1">uS12 MTTase</shortName>
        <shortName evidence="1">uS12 methylthiotransferase</shortName>
        <ecNumber evidence="1">2.8.4.4</ecNumber>
    </recommendedName>
    <alternativeName>
        <fullName evidence="1">Ribosomal protein uS12 (aspartate-C(3))-methylthiotransferase</fullName>
    </alternativeName>
    <alternativeName>
        <fullName evidence="1">Ribosome maturation factor RimO</fullName>
    </alternativeName>
</protein>
<proteinExistence type="inferred from homology"/>
<gene>
    <name evidence="1" type="primary">rimO</name>
    <name type="ordered locus">Helmi_22940</name>
    <name type="ORF">HM1_2369</name>
</gene>